<gene>
    <name evidence="9" type="primary">AMIGO2</name>
    <name evidence="12" type="synonym">ALI1</name>
</gene>
<name>AMGO2_HUMAN</name>
<protein>
    <recommendedName>
        <fullName>Amphoterin-induced protein 2</fullName>
    </recommendedName>
    <alternativeName>
        <fullName>AMIGO-2</fullName>
    </alternativeName>
    <alternativeName>
        <fullName>Alivin-1</fullName>
    </alternativeName>
    <alternativeName>
        <fullName>Differentially expressed in gastric adenocarcinomas</fullName>
        <shortName>DEGA</shortName>
    </alternativeName>
</protein>
<organism>
    <name type="scientific">Homo sapiens</name>
    <name type="common">Human</name>
    <dbReference type="NCBI Taxonomy" id="9606"/>
    <lineage>
        <taxon>Eukaryota</taxon>
        <taxon>Metazoa</taxon>
        <taxon>Chordata</taxon>
        <taxon>Craniata</taxon>
        <taxon>Vertebrata</taxon>
        <taxon>Euteleostomi</taxon>
        <taxon>Mammalia</taxon>
        <taxon>Eutheria</taxon>
        <taxon>Euarchontoglires</taxon>
        <taxon>Primates</taxon>
        <taxon>Haplorrhini</taxon>
        <taxon>Catarrhini</taxon>
        <taxon>Hominidae</taxon>
        <taxon>Homo</taxon>
    </lineage>
</organism>
<evidence type="ECO:0000250" key="1"/>
<evidence type="ECO:0000255" key="2"/>
<evidence type="ECO:0000255" key="3">
    <source>
        <dbReference type="PROSITE-ProRule" id="PRU00114"/>
    </source>
</evidence>
<evidence type="ECO:0000256" key="4">
    <source>
        <dbReference type="SAM" id="MobiDB-lite"/>
    </source>
</evidence>
<evidence type="ECO:0000269" key="5">
    <source>
    </source>
</evidence>
<evidence type="ECO:0000269" key="6">
    <source>
    </source>
</evidence>
<evidence type="ECO:0000305" key="7"/>
<evidence type="ECO:0000312" key="8">
    <source>
        <dbReference type="EMBL" id="AAH14103.2"/>
    </source>
</evidence>
<evidence type="ECO:0000312" key="9">
    <source>
        <dbReference type="EMBL" id="AAH47595.1"/>
    </source>
</evidence>
<evidence type="ECO:0000312" key="10">
    <source>
        <dbReference type="EMBL" id="AAO48946.1"/>
    </source>
</evidence>
<evidence type="ECO:0000312" key="11">
    <source>
        <dbReference type="EMBL" id="AAR83271.1"/>
    </source>
</evidence>
<evidence type="ECO:0000312" key="12">
    <source>
        <dbReference type="EMBL" id="BAC81189.1"/>
    </source>
</evidence>
<comment type="function">
    <text>Required for depolarization-dependent survival of cultured cerebellar granule neurons. May mediate homophilic as well as heterophilic cell-cell interaction with AMIGO1 or AMIGO3. May contribute to signal transduction through its intracellular domain. May be required for tumorigenesis of a subset of gastric adenocarcinomas.</text>
</comment>
<comment type="subunit">
    <text evidence="1">Binds itself as well as AMIGO1 and AMIGO3.</text>
</comment>
<comment type="interaction">
    <interactant intactId="EBI-3866830">
        <id>Q86SJ2</id>
    </interactant>
    <interactant intactId="EBI-766279">
        <id>O00555</id>
        <label>CACNA1A</label>
    </interactant>
    <organismsDiffer>false</organismsDiffer>
    <experiments>2</experiments>
</comment>
<comment type="interaction">
    <interactant intactId="EBI-3866830">
        <id>Q86SJ2</id>
    </interactant>
    <interactant intactId="EBI-11603430">
        <id>Q6PL24</id>
        <label>TMED8</label>
    </interactant>
    <organismsDiffer>false</organismsDiffer>
    <experiments>3</experiments>
</comment>
<comment type="subcellular location">
    <subcellularLocation>
        <location evidence="1">Cell membrane</location>
        <topology evidence="1">Single-pass type I membrane protein</topology>
    </subcellularLocation>
    <subcellularLocation>
        <location evidence="1">Nucleus</location>
    </subcellularLocation>
    <text evidence="1">Associated with nucleus as well as plasma membrane. Restricted to somata of cerebellar as well as hippocampal neurons (By similarity).</text>
</comment>
<comment type="tissue specificity">
    <text evidence="6">Highest levels in breast, ovary, cervix, and uterus. Lower levels in lung, colon, and rectum. Differentially expressed in 56% of thyroid, 57% of pancreatic and 45% of stomach cancers.</text>
</comment>
<comment type="similarity">
    <text evidence="7">Belongs to the immunoglobulin superfamily. AMIGO family.</text>
</comment>
<accession>Q86SJ2</accession>
<accession>Q4VBP6</accession>
<accession>Q7Z4A0</accession>
<accession>Q96CN8</accession>
<dbReference type="EMBL" id="AY237005">
    <property type="protein sequence ID" value="AAO48946.1"/>
    <property type="molecule type" value="mRNA"/>
</dbReference>
<dbReference type="EMBL" id="AB079074">
    <property type="protein sequence ID" value="BAC81188.1"/>
    <property type="molecule type" value="mRNA"/>
</dbReference>
<dbReference type="EMBL" id="AB080610">
    <property type="protein sequence ID" value="BAC81189.1"/>
    <property type="molecule type" value="mRNA"/>
</dbReference>
<dbReference type="EMBL" id="AY454159">
    <property type="protein sequence ID" value="AAR83271.1"/>
    <property type="molecule type" value="mRNA"/>
</dbReference>
<dbReference type="EMBL" id="AL833007">
    <property type="protein sequence ID" value="CAH56293.1"/>
    <property type="molecule type" value="mRNA"/>
</dbReference>
<dbReference type="EMBL" id="BC014103">
    <property type="protein sequence ID" value="AAH14103.2"/>
    <property type="molecule type" value="mRNA"/>
</dbReference>
<dbReference type="EMBL" id="BC047595">
    <property type="protein sequence ID" value="AAH47595.1"/>
    <property type="molecule type" value="mRNA"/>
</dbReference>
<dbReference type="EMBL" id="BC095477">
    <property type="protein sequence ID" value="AAH95477.1"/>
    <property type="molecule type" value="mRNA"/>
</dbReference>
<dbReference type="CCDS" id="CCDS8751.1"/>
<dbReference type="RefSeq" id="NP_001137140.1">
    <property type="nucleotide sequence ID" value="NM_001143668.1"/>
</dbReference>
<dbReference type="RefSeq" id="NP_001357228.1">
    <property type="nucleotide sequence ID" value="NM_001370299.1"/>
</dbReference>
<dbReference type="RefSeq" id="NP_862830.1">
    <property type="nucleotide sequence ID" value="NM_181847.4"/>
</dbReference>
<dbReference type="RefSeq" id="XP_005268894.1">
    <property type="nucleotide sequence ID" value="XM_005268837.3"/>
</dbReference>
<dbReference type="RefSeq" id="XP_047284741.1">
    <property type="nucleotide sequence ID" value="XM_047428785.1"/>
</dbReference>
<dbReference type="SMR" id="Q86SJ2"/>
<dbReference type="BioGRID" id="131497">
    <property type="interactions" value="36"/>
</dbReference>
<dbReference type="FunCoup" id="Q86SJ2">
    <property type="interactions" value="22"/>
</dbReference>
<dbReference type="IntAct" id="Q86SJ2">
    <property type="interactions" value="6"/>
</dbReference>
<dbReference type="STRING" id="9606.ENSP00000266581"/>
<dbReference type="GlyConnect" id="1007">
    <property type="glycosylation" value="4 N-Linked glycans (1 site)"/>
</dbReference>
<dbReference type="GlyCosmos" id="Q86SJ2">
    <property type="glycosylation" value="8 sites, 4 glycans"/>
</dbReference>
<dbReference type="GlyGen" id="Q86SJ2">
    <property type="glycosylation" value="10 sites, 6 N-linked glycans (3 sites)"/>
</dbReference>
<dbReference type="iPTMnet" id="Q86SJ2"/>
<dbReference type="PhosphoSitePlus" id="Q86SJ2"/>
<dbReference type="SwissPalm" id="Q86SJ2"/>
<dbReference type="BioMuta" id="AMIGO2"/>
<dbReference type="DMDM" id="68052338"/>
<dbReference type="jPOST" id="Q86SJ2"/>
<dbReference type="MassIVE" id="Q86SJ2"/>
<dbReference type="PaxDb" id="9606-ENSP00000266581"/>
<dbReference type="PeptideAtlas" id="Q86SJ2"/>
<dbReference type="ProteomicsDB" id="69596"/>
<dbReference type="Pumba" id="Q86SJ2"/>
<dbReference type="Antibodypedia" id="13397">
    <property type="antibodies" value="233 antibodies from 31 providers"/>
</dbReference>
<dbReference type="DNASU" id="347902"/>
<dbReference type="Ensembl" id="ENST00000266581.4">
    <property type="protein sequence ID" value="ENSP00000266581.4"/>
    <property type="gene ID" value="ENSG00000139211.7"/>
</dbReference>
<dbReference type="Ensembl" id="ENST00000429635.1">
    <property type="protein sequence ID" value="ENSP00000406020.1"/>
    <property type="gene ID" value="ENSG00000139211.7"/>
</dbReference>
<dbReference type="Ensembl" id="ENST00000550413.2">
    <property type="protein sequence ID" value="ENSP00000449034.1"/>
    <property type="gene ID" value="ENSG00000139211.7"/>
</dbReference>
<dbReference type="GeneID" id="347902"/>
<dbReference type="KEGG" id="hsa:347902"/>
<dbReference type="MANE-Select" id="ENST00000550413.2">
    <property type="protein sequence ID" value="ENSP00000449034.1"/>
    <property type="RefSeq nucleotide sequence ID" value="NM_001370299.1"/>
    <property type="RefSeq protein sequence ID" value="NP_001357228.1"/>
</dbReference>
<dbReference type="UCSC" id="uc001rpk.4">
    <property type="organism name" value="human"/>
</dbReference>
<dbReference type="AGR" id="HGNC:24073"/>
<dbReference type="CTD" id="347902"/>
<dbReference type="DisGeNET" id="347902"/>
<dbReference type="GeneCards" id="AMIGO2"/>
<dbReference type="HGNC" id="HGNC:24073">
    <property type="gene designation" value="AMIGO2"/>
</dbReference>
<dbReference type="HPA" id="ENSG00000139211">
    <property type="expression patterns" value="Low tissue specificity"/>
</dbReference>
<dbReference type="MIM" id="615690">
    <property type="type" value="gene"/>
</dbReference>
<dbReference type="neXtProt" id="NX_Q86SJ2"/>
<dbReference type="OpenTargets" id="ENSG00000139211"/>
<dbReference type="PharmGKB" id="PA142672626"/>
<dbReference type="VEuPathDB" id="HostDB:ENSG00000139211"/>
<dbReference type="eggNOG" id="ENOG502R009">
    <property type="taxonomic scope" value="Eukaryota"/>
</dbReference>
<dbReference type="GeneTree" id="ENSGT00950000183146"/>
<dbReference type="HOGENOM" id="CLU_030478_0_0_1"/>
<dbReference type="InParanoid" id="Q86SJ2"/>
<dbReference type="OMA" id="DFVWVGP"/>
<dbReference type="OrthoDB" id="676979at2759"/>
<dbReference type="PAN-GO" id="Q86SJ2">
    <property type="GO annotations" value="2 GO annotations based on evolutionary models"/>
</dbReference>
<dbReference type="PhylomeDB" id="Q86SJ2"/>
<dbReference type="TreeFam" id="TF326838"/>
<dbReference type="PathwayCommons" id="Q86SJ2"/>
<dbReference type="Reactome" id="R-HSA-9013149">
    <property type="pathway name" value="RAC1 GTPase cycle"/>
</dbReference>
<dbReference type="Reactome" id="R-HSA-9013423">
    <property type="pathway name" value="RAC3 GTPase cycle"/>
</dbReference>
<dbReference type="SignaLink" id="Q86SJ2"/>
<dbReference type="BioGRID-ORCS" id="347902">
    <property type="hits" value="22 hits in 1166 CRISPR screens"/>
</dbReference>
<dbReference type="GenomeRNAi" id="347902"/>
<dbReference type="Pharos" id="Q86SJ2">
    <property type="development level" value="Tbio"/>
</dbReference>
<dbReference type="PRO" id="PR:Q86SJ2"/>
<dbReference type="Proteomes" id="UP000005640">
    <property type="component" value="Chromosome 12"/>
</dbReference>
<dbReference type="RNAct" id="Q86SJ2">
    <property type="molecule type" value="protein"/>
</dbReference>
<dbReference type="Bgee" id="ENSG00000139211">
    <property type="expression patterns" value="Expressed in blood vessel layer and 190 other cell types or tissues"/>
</dbReference>
<dbReference type="ExpressionAtlas" id="Q86SJ2">
    <property type="expression patterns" value="baseline and differential"/>
</dbReference>
<dbReference type="GO" id="GO:0016020">
    <property type="term" value="C:membrane"/>
    <property type="evidence" value="ECO:0000318"/>
    <property type="project" value="GO_Central"/>
</dbReference>
<dbReference type="GO" id="GO:0005634">
    <property type="term" value="C:nucleus"/>
    <property type="evidence" value="ECO:0007669"/>
    <property type="project" value="UniProtKB-SubCell"/>
</dbReference>
<dbReference type="GO" id="GO:0005886">
    <property type="term" value="C:plasma membrane"/>
    <property type="evidence" value="ECO:0007669"/>
    <property type="project" value="UniProtKB-SubCell"/>
</dbReference>
<dbReference type="GO" id="GO:0007420">
    <property type="term" value="P:brain development"/>
    <property type="evidence" value="ECO:0000318"/>
    <property type="project" value="GO_Central"/>
</dbReference>
<dbReference type="GO" id="GO:0007157">
    <property type="term" value="P:heterophilic cell-cell adhesion via plasma membrane cell adhesion molecules"/>
    <property type="evidence" value="ECO:0000250"/>
    <property type="project" value="UniProtKB"/>
</dbReference>
<dbReference type="GO" id="GO:0007156">
    <property type="term" value="P:homophilic cell adhesion via plasma membrane adhesion molecules"/>
    <property type="evidence" value="ECO:0000250"/>
    <property type="project" value="UniProtKB"/>
</dbReference>
<dbReference type="GO" id="GO:0043069">
    <property type="term" value="P:negative regulation of programmed cell death"/>
    <property type="evidence" value="ECO:0000250"/>
    <property type="project" value="UniProtKB"/>
</dbReference>
<dbReference type="GO" id="GO:0051965">
    <property type="term" value="P:positive regulation of synapse assembly"/>
    <property type="evidence" value="ECO:0000318"/>
    <property type="project" value="GO_Central"/>
</dbReference>
<dbReference type="FunFam" id="2.60.40.10:FF:001047">
    <property type="entry name" value="amphoterin-induced protein 2 isoform X1"/>
    <property type="match status" value="1"/>
</dbReference>
<dbReference type="FunFam" id="3.80.10.10:FF:000170">
    <property type="entry name" value="amphoterin-induced protein 2 isoform X1"/>
    <property type="match status" value="1"/>
</dbReference>
<dbReference type="Gene3D" id="2.60.40.10">
    <property type="entry name" value="Immunoglobulins"/>
    <property type="match status" value="1"/>
</dbReference>
<dbReference type="Gene3D" id="3.80.10.10">
    <property type="entry name" value="Ribonuclease Inhibitor"/>
    <property type="match status" value="1"/>
</dbReference>
<dbReference type="InterPro" id="IPR031283">
    <property type="entry name" value="AMIGO"/>
</dbReference>
<dbReference type="InterPro" id="IPR000483">
    <property type="entry name" value="Cys-rich_flank_reg_C"/>
</dbReference>
<dbReference type="InterPro" id="IPR007110">
    <property type="entry name" value="Ig-like_dom"/>
</dbReference>
<dbReference type="InterPro" id="IPR036179">
    <property type="entry name" value="Ig-like_dom_sf"/>
</dbReference>
<dbReference type="InterPro" id="IPR013783">
    <property type="entry name" value="Ig-like_fold"/>
</dbReference>
<dbReference type="InterPro" id="IPR003599">
    <property type="entry name" value="Ig_sub"/>
</dbReference>
<dbReference type="InterPro" id="IPR013151">
    <property type="entry name" value="Immunoglobulin_dom"/>
</dbReference>
<dbReference type="InterPro" id="IPR001611">
    <property type="entry name" value="Leu-rich_rpt"/>
</dbReference>
<dbReference type="InterPro" id="IPR003591">
    <property type="entry name" value="Leu-rich_rpt_typical-subtyp"/>
</dbReference>
<dbReference type="InterPro" id="IPR032675">
    <property type="entry name" value="LRR_dom_sf"/>
</dbReference>
<dbReference type="PANTHER" id="PTHR24368">
    <property type="entry name" value="AMPHOTERIN-INDUCED PROTEIN"/>
    <property type="match status" value="1"/>
</dbReference>
<dbReference type="PANTHER" id="PTHR24368:SF209">
    <property type="entry name" value="AMPHOTERIN-INDUCED PROTEIN 2"/>
    <property type="match status" value="1"/>
</dbReference>
<dbReference type="Pfam" id="PF00047">
    <property type="entry name" value="ig"/>
    <property type="match status" value="1"/>
</dbReference>
<dbReference type="Pfam" id="PF13855">
    <property type="entry name" value="LRR_8"/>
    <property type="match status" value="1"/>
</dbReference>
<dbReference type="SMART" id="SM00409">
    <property type="entry name" value="IG"/>
    <property type="match status" value="1"/>
</dbReference>
<dbReference type="SMART" id="SM00369">
    <property type="entry name" value="LRR_TYP"/>
    <property type="match status" value="5"/>
</dbReference>
<dbReference type="SMART" id="SM00082">
    <property type="entry name" value="LRRCT"/>
    <property type="match status" value="1"/>
</dbReference>
<dbReference type="SUPFAM" id="SSF48726">
    <property type="entry name" value="Immunoglobulin"/>
    <property type="match status" value="1"/>
</dbReference>
<dbReference type="SUPFAM" id="SSF52058">
    <property type="entry name" value="L domain-like"/>
    <property type="match status" value="1"/>
</dbReference>
<dbReference type="PROSITE" id="PS50835">
    <property type="entry name" value="IG_LIKE"/>
    <property type="match status" value="1"/>
</dbReference>
<dbReference type="PROSITE" id="PS51450">
    <property type="entry name" value="LRR"/>
    <property type="match status" value="7"/>
</dbReference>
<keyword id="KW-0130">Cell adhesion</keyword>
<keyword id="KW-1003">Cell membrane</keyword>
<keyword id="KW-1015">Disulfide bond</keyword>
<keyword id="KW-0325">Glycoprotein</keyword>
<keyword id="KW-0393">Immunoglobulin domain</keyword>
<keyword id="KW-0433">Leucine-rich repeat</keyword>
<keyword id="KW-0472">Membrane</keyword>
<keyword id="KW-0539">Nucleus</keyword>
<keyword id="KW-1267">Proteomics identification</keyword>
<keyword id="KW-1185">Reference proteome</keyword>
<keyword id="KW-0677">Repeat</keyword>
<keyword id="KW-0732">Signal</keyword>
<keyword id="KW-0812">Transmembrane</keyword>
<keyword id="KW-1133">Transmembrane helix</keyword>
<feature type="signal peptide" evidence="2">
    <location>
        <begin position="1"/>
        <end position="39"/>
    </location>
</feature>
<feature type="chain" id="PRO_0000014509" description="Amphoterin-induced protein 2" evidence="2">
    <location>
        <begin position="40"/>
        <end position="522"/>
    </location>
</feature>
<feature type="topological domain" description="Extracellular" evidence="2">
    <location>
        <begin position="40"/>
        <end position="398"/>
    </location>
</feature>
<feature type="transmembrane region" description="Helical" evidence="2">
    <location>
        <begin position="399"/>
        <end position="419"/>
    </location>
</feature>
<feature type="topological domain" description="Cytoplasmic" evidence="2">
    <location>
        <begin position="420"/>
        <end position="522"/>
    </location>
</feature>
<feature type="domain" description="LRRNT">
    <location>
        <begin position="40"/>
        <end position="68"/>
    </location>
</feature>
<feature type="repeat" description="LRR 1">
    <location>
        <begin position="69"/>
        <end position="90"/>
    </location>
</feature>
<feature type="repeat" description="LRR 2">
    <location>
        <begin position="94"/>
        <end position="115"/>
    </location>
</feature>
<feature type="repeat" description="LRR 3">
    <location>
        <begin position="118"/>
        <end position="139"/>
    </location>
</feature>
<feature type="repeat" description="LRR 4">
    <location>
        <begin position="142"/>
        <end position="163"/>
    </location>
</feature>
<feature type="repeat" description="LRR 5">
    <location>
        <begin position="166"/>
        <end position="187"/>
    </location>
</feature>
<feature type="repeat" description="LRR 6">
    <location>
        <begin position="193"/>
        <end position="214"/>
    </location>
</feature>
<feature type="domain" description="LRRCT">
    <location>
        <begin position="228"/>
        <end position="284"/>
    </location>
</feature>
<feature type="domain" description="Ig-like C2-type" evidence="2">
    <location>
        <begin position="289"/>
        <end position="379"/>
    </location>
</feature>
<feature type="region of interest" description="Disordered" evidence="4">
    <location>
        <begin position="501"/>
        <end position="522"/>
    </location>
</feature>
<feature type="glycosylation site" description="N-linked (GlcNAc...) asparagine" evidence="2">
    <location>
        <position position="58"/>
    </location>
</feature>
<feature type="glycosylation site" description="N-linked (GlcNAc...) asparagine" evidence="2">
    <location>
        <position position="104"/>
    </location>
</feature>
<feature type="glycosylation site" description="N-linked (GlcNAc...) asparagine" evidence="2">
    <location>
        <position position="281"/>
    </location>
</feature>
<feature type="glycosylation site" description="N-linked (GlcNAc...) asparagine" evidence="2">
    <location>
        <position position="288"/>
    </location>
</feature>
<feature type="glycosylation site" description="N-linked (GlcNAc...) asparagine" evidence="2">
    <location>
        <position position="345"/>
    </location>
</feature>
<feature type="glycosylation site" description="N-linked (GlcNAc...) asparagine" evidence="2">
    <location>
        <position position="373"/>
    </location>
</feature>
<feature type="glycosylation site" description="N-linked (GlcNAc...) asparagine" evidence="2">
    <location>
        <position position="381"/>
    </location>
</feature>
<feature type="glycosylation site" description="N-linked (GlcNAc...) asparagine" evidence="2">
    <location>
        <position position="384"/>
    </location>
</feature>
<feature type="disulfide bond" evidence="3">
    <location>
        <begin position="41"/>
        <end position="47"/>
    </location>
</feature>
<feature type="disulfide bond" evidence="3">
    <location>
        <begin position="45"/>
        <end position="54"/>
    </location>
</feature>
<feature type="disulfide bond" evidence="3">
    <location>
        <begin position="232"/>
        <end position="260"/>
    </location>
</feature>
<feature type="disulfide bond" evidence="3">
    <location>
        <begin position="234"/>
        <end position="282"/>
    </location>
</feature>
<feature type="disulfide bond" evidence="3">
    <location>
        <begin position="310"/>
        <end position="363"/>
    </location>
</feature>
<reference evidence="10" key="1">
    <citation type="journal article" date="2003" name="J. Cell Biol.">
        <title>AMIGO, a transmembrane protein implicated in axon tract development, defines a novel protein family with leucine-rich repeats.</title>
        <authorList>
            <person name="Kuja-Panula J."/>
            <person name="Kiiltomaeki M."/>
            <person name="Yamashiro T."/>
            <person name="Rouhiainen A."/>
            <person name="Rauvala H."/>
        </authorList>
    </citation>
    <scope>NUCLEOTIDE SEQUENCE [MRNA]</scope>
    <source>
        <tissue evidence="5">Fibrosarcoma</tissue>
    </source>
</reference>
<reference evidence="12" key="2">
    <citation type="journal article" date="2003" name="J. Neurosci.">
        <title>Alivin 1, a novel neuronal activity-dependent gene, inhibits apoptosis and promotes survival of cerebellar granule neurons.</title>
        <authorList>
            <person name="Ono T."/>
            <person name="Sekino-Suzuki N."/>
            <person name="Kikkawa Y."/>
            <person name="Yonekawa H."/>
            <person name="Kawashima S."/>
        </authorList>
    </citation>
    <scope>NUCLEOTIDE SEQUENCE [MRNA]</scope>
    <source>
        <tissue evidence="12">Brain</tissue>
    </source>
</reference>
<reference evidence="7 11" key="3">
    <citation type="journal article" date="2004" name="Oncogene">
        <title>DEGA/AMIGO-2, a leucine-rich repeat family member, differentially expressed in human gastric adenocarcinoma: effects on ploidy, chromosomal stability, cell adhesion/migration and tumorigenicity.</title>
        <authorList>
            <person name="Rabenau K.E."/>
            <person name="O'Toole J.M."/>
            <person name="Bassi R."/>
            <person name="Kotanides H."/>
            <person name="Witte L."/>
            <person name="Ludwig D.L."/>
            <person name="Pereira D.S."/>
        </authorList>
    </citation>
    <scope>NUCLEOTIDE SEQUENCE [MRNA]</scope>
    <scope>TISSUE SPECIFICITY</scope>
</reference>
<reference key="4">
    <citation type="journal article" date="2007" name="BMC Genomics">
        <title>The full-ORF clone resource of the German cDNA consortium.</title>
        <authorList>
            <person name="Bechtel S."/>
            <person name="Rosenfelder H."/>
            <person name="Duda A."/>
            <person name="Schmidt C.P."/>
            <person name="Ernst U."/>
            <person name="Wellenreuther R."/>
            <person name="Mehrle A."/>
            <person name="Schuster C."/>
            <person name="Bahr A."/>
            <person name="Bloecker H."/>
            <person name="Heubner D."/>
            <person name="Hoerlein A."/>
            <person name="Michel G."/>
            <person name="Wedler H."/>
            <person name="Koehrer K."/>
            <person name="Ottenwaelder B."/>
            <person name="Poustka A."/>
            <person name="Wiemann S."/>
            <person name="Schupp I."/>
        </authorList>
    </citation>
    <scope>NUCLEOTIDE SEQUENCE [LARGE SCALE MRNA]</scope>
    <source>
        <tissue>Stomach</tissue>
    </source>
</reference>
<reference evidence="9" key="5">
    <citation type="journal article" date="2004" name="Genome Res.">
        <title>The status, quality, and expansion of the NIH full-length cDNA project: the Mammalian Gene Collection (MGC).</title>
        <authorList>
            <consortium name="The MGC Project Team"/>
        </authorList>
    </citation>
    <scope>NUCLEOTIDE SEQUENCE [LARGE SCALE MRNA]</scope>
    <source>
        <tissue evidence="9">Testis</tissue>
        <tissue evidence="8">Uterus</tissue>
    </source>
</reference>
<reference key="6">
    <citation type="journal article" date="2006" name="Cell">
        <title>Global, in vivo, and site-specific phosphorylation dynamics in signaling networks.</title>
        <authorList>
            <person name="Olsen J.V."/>
            <person name="Blagoev B."/>
            <person name="Gnad F."/>
            <person name="Macek B."/>
            <person name="Kumar C."/>
            <person name="Mortensen P."/>
            <person name="Mann M."/>
        </authorList>
    </citation>
    <scope>IDENTIFICATION BY MASS SPECTROMETRY [LARGE SCALE ANALYSIS]</scope>
    <source>
        <tissue>Cervix carcinoma</tissue>
    </source>
</reference>
<proteinExistence type="evidence at protein level"/>
<sequence>MSLRVHTLPTLLGAVVRPGCRELLCLLMITVTVGPGASGVCPTACICATDIVSCTNKNLSKVPGNLFRLIKRLDLSYNRIGLLDSEWIPVSFAKLNTLILRHNNITSISTGSFSTTPNLKCLDLSSNKLKTVKNAVFQELKVLEVLLLYNNHISYLDPSAFGGLSQLQKLYLSGNFLTQFPMDLYVGRFKLAELMFLDVSYNRIPSMPMHHINLVPGKQLRGIYLHGNPFVCDCSLYSLLVFWYRRHFSSVMDFKNDYTCRLWSDSRHSRQVLLLQDSFMNCSDSIINGSFRALGFIHEAQVGERLMVHCDSKTGNANTDFIWVGPDNRLLEPDKEMENFYVFHNGSLVIESPRFEDAGVYSCIAMNKQRLLNETVDVTINVSNFTVSRSHAHEAFNTAFTTLAACVASIVLVLLYLYLTPCPCKCKTKRQKNMLHQSNAHSSILSPGPASDASADERKAGAGKRVVFLEPLKDTAAGQNGKVRLFPSEAVIAEGILKSTRGKSDSDSVNSVFSDTPFVAST</sequence>